<gene>
    <name evidence="3" type="primary">C2orf92</name>
    <name evidence="3" type="synonym">LINC01125</name>
</gene>
<comment type="subcellular location">
    <subcellularLocation>
        <location evidence="1">Membrane</location>
        <topology evidence="1">Single-pass membrane protein</topology>
    </subcellularLocation>
</comment>
<name>CB092_HUMAN</name>
<dbReference type="EMBL" id="AC017099">
    <property type="status" value="NOT_ANNOTATED_CDS"/>
    <property type="molecule type" value="Genomic_DNA"/>
</dbReference>
<dbReference type="CCDS" id="CCDS86862.1"/>
<dbReference type="RefSeq" id="NP_001338297.1">
    <property type="nucleotide sequence ID" value="NM_001351368.2"/>
</dbReference>
<dbReference type="SMR" id="A0A1B0GVN3"/>
<dbReference type="STRING" id="9606.ENSP00000490587"/>
<dbReference type="BioMuta" id="C2orf92"/>
<dbReference type="jPOST" id="A0A1B0GVN3"/>
<dbReference type="Ensembl" id="ENST00000627399.4">
    <property type="protein sequence ID" value="ENSP00000490587.1"/>
    <property type="gene ID" value="ENSG00000228486.11"/>
</dbReference>
<dbReference type="Ensembl" id="ENST00000708100.1">
    <property type="protein sequence ID" value="ENSP00000517085.1"/>
    <property type="gene ID" value="ENSG00000291598.1"/>
</dbReference>
<dbReference type="GeneID" id="728537"/>
<dbReference type="MANE-Select" id="ENST00000627399.4">
    <property type="protein sequence ID" value="ENSP00000490587.1"/>
    <property type="RefSeq nucleotide sequence ID" value="NM_001351368.2"/>
    <property type="RefSeq protein sequence ID" value="NP_001338297.1"/>
</dbReference>
<dbReference type="AGR" id="HGNC:49272"/>
<dbReference type="GeneCards" id="C2orf92"/>
<dbReference type="HGNC" id="HGNC:49272">
    <property type="gene designation" value="C2orf92"/>
</dbReference>
<dbReference type="HPA" id="ENSG00000228486">
    <property type="expression patterns" value="Tissue enhanced (choroid plexus, testis)"/>
</dbReference>
<dbReference type="neXtProt" id="NX_A0A1B0GVN3"/>
<dbReference type="OpenTargets" id="ENSG00000228486"/>
<dbReference type="VEuPathDB" id="HostDB:ENSG00000228486"/>
<dbReference type="GeneTree" id="ENSGT00850000133613"/>
<dbReference type="InParanoid" id="A0A1B0GVN3"/>
<dbReference type="OMA" id="RNTQKSY"/>
<dbReference type="OrthoDB" id="9539749at2759"/>
<dbReference type="PAN-GO" id="A0A1B0GVN3">
    <property type="GO annotations" value="0 GO annotations based on evolutionary models"/>
</dbReference>
<dbReference type="Pharos" id="A0A1B0GVN3">
    <property type="development level" value="Tdark"/>
</dbReference>
<dbReference type="PRO" id="PR:A0A1B0GVN3"/>
<dbReference type="Proteomes" id="UP000005640">
    <property type="component" value="Chromosome 2"/>
</dbReference>
<dbReference type="RNAct" id="A0A1B0GVN3">
    <property type="molecule type" value="protein"/>
</dbReference>
<dbReference type="Bgee" id="ENSG00000228486">
    <property type="expression patterns" value="Expressed in right uterine tube and 102 other cell types or tissues"/>
</dbReference>
<dbReference type="ExpressionAtlas" id="A0A1B0GVN3">
    <property type="expression patterns" value="baseline and differential"/>
</dbReference>
<dbReference type="GO" id="GO:0016020">
    <property type="term" value="C:membrane"/>
    <property type="evidence" value="ECO:0007669"/>
    <property type="project" value="UniProtKB-SubCell"/>
</dbReference>
<proteinExistence type="inferred from homology"/>
<protein>
    <recommendedName>
        <fullName evidence="2">Uncharacterized protein C2orf92</fullName>
    </recommendedName>
    <alternativeName>
        <fullName evidence="3">Long intergenic non-protein coding RNA 1125</fullName>
    </alternativeName>
</protein>
<sequence>MSRAMALFFVLCWIQDEIVLQVFSKVPYDPSFDETRTAVRSITKRDTQKSYSQQKSLNNAAFASGSNEREEHLAKIFDEILLQVFPKFPYDPSFNEATAVRSITKTDMRKGTSIAWNSPKPEYFLGSVDKIPDKDHLSEEKNFKESCLFDRDLREQLTTIDKETLQGAAKPDAHFRTMPCGQLLHFLQRNTIIAAVSGVAILMAIVLLLLGLASYIRKKQPSSPLANTTYNIFIMDGKTWWHNSEEKNFTKLAKKQKQLKSSSCV</sequence>
<accession>A0A1B0GVN3</accession>
<evidence type="ECO:0000255" key="1"/>
<evidence type="ECO:0000305" key="2"/>
<evidence type="ECO:0000312" key="3">
    <source>
        <dbReference type="HGNC" id="HGNC:49272"/>
    </source>
</evidence>
<feature type="signal peptide" evidence="1">
    <location>
        <begin position="1"/>
        <end position="20"/>
    </location>
</feature>
<feature type="chain" id="PRO_5008408670" description="Uncharacterized protein C2orf92" evidence="1">
    <location>
        <begin position="21"/>
        <end position="265"/>
    </location>
</feature>
<feature type="transmembrane region" description="Helical" evidence="1">
    <location>
        <begin position="192"/>
        <end position="212"/>
    </location>
</feature>
<keyword id="KW-0472">Membrane</keyword>
<keyword id="KW-1185">Reference proteome</keyword>
<keyword id="KW-0732">Signal</keyword>
<keyword id="KW-0812">Transmembrane</keyword>
<keyword id="KW-1133">Transmembrane helix</keyword>
<organism>
    <name type="scientific">Homo sapiens</name>
    <name type="common">Human</name>
    <dbReference type="NCBI Taxonomy" id="9606"/>
    <lineage>
        <taxon>Eukaryota</taxon>
        <taxon>Metazoa</taxon>
        <taxon>Chordata</taxon>
        <taxon>Craniata</taxon>
        <taxon>Vertebrata</taxon>
        <taxon>Euteleostomi</taxon>
        <taxon>Mammalia</taxon>
        <taxon>Eutheria</taxon>
        <taxon>Euarchontoglires</taxon>
        <taxon>Primates</taxon>
        <taxon>Haplorrhini</taxon>
        <taxon>Catarrhini</taxon>
        <taxon>Hominidae</taxon>
        <taxon>Homo</taxon>
    </lineage>
</organism>
<reference key="1">
    <citation type="journal article" date="2005" name="Nature">
        <title>Generation and annotation of the DNA sequences of human chromosomes 2 and 4.</title>
        <authorList>
            <person name="Hillier L.W."/>
            <person name="Graves T.A."/>
            <person name="Fulton R.S."/>
            <person name="Fulton L.A."/>
            <person name="Pepin K.H."/>
            <person name="Minx P."/>
            <person name="Wagner-McPherson C."/>
            <person name="Layman D."/>
            <person name="Wylie K."/>
            <person name="Sekhon M."/>
            <person name="Becker M.C."/>
            <person name="Fewell G.A."/>
            <person name="Delehaunty K.D."/>
            <person name="Miner T.L."/>
            <person name="Nash W.E."/>
            <person name="Kremitzki C."/>
            <person name="Oddy L."/>
            <person name="Du H."/>
            <person name="Sun H."/>
            <person name="Bradshaw-Cordum H."/>
            <person name="Ali J."/>
            <person name="Carter J."/>
            <person name="Cordes M."/>
            <person name="Harris A."/>
            <person name="Isak A."/>
            <person name="van Brunt A."/>
            <person name="Nguyen C."/>
            <person name="Du F."/>
            <person name="Courtney L."/>
            <person name="Kalicki J."/>
            <person name="Ozersky P."/>
            <person name="Abbott S."/>
            <person name="Armstrong J."/>
            <person name="Belter E.A."/>
            <person name="Caruso L."/>
            <person name="Cedroni M."/>
            <person name="Cotton M."/>
            <person name="Davidson T."/>
            <person name="Desai A."/>
            <person name="Elliott G."/>
            <person name="Erb T."/>
            <person name="Fronick C."/>
            <person name="Gaige T."/>
            <person name="Haakenson W."/>
            <person name="Haglund K."/>
            <person name="Holmes A."/>
            <person name="Harkins R."/>
            <person name="Kim K."/>
            <person name="Kruchowski S.S."/>
            <person name="Strong C.M."/>
            <person name="Grewal N."/>
            <person name="Goyea E."/>
            <person name="Hou S."/>
            <person name="Levy A."/>
            <person name="Martinka S."/>
            <person name="Mead K."/>
            <person name="McLellan M.D."/>
            <person name="Meyer R."/>
            <person name="Randall-Maher J."/>
            <person name="Tomlinson C."/>
            <person name="Dauphin-Kohlberg S."/>
            <person name="Kozlowicz-Reilly A."/>
            <person name="Shah N."/>
            <person name="Swearengen-Shahid S."/>
            <person name="Snider J."/>
            <person name="Strong J.T."/>
            <person name="Thompson J."/>
            <person name="Yoakum M."/>
            <person name="Leonard S."/>
            <person name="Pearman C."/>
            <person name="Trani L."/>
            <person name="Radionenko M."/>
            <person name="Waligorski J.E."/>
            <person name="Wang C."/>
            <person name="Rock S.M."/>
            <person name="Tin-Wollam A.-M."/>
            <person name="Maupin R."/>
            <person name="Latreille P."/>
            <person name="Wendl M.C."/>
            <person name="Yang S.-P."/>
            <person name="Pohl C."/>
            <person name="Wallis J.W."/>
            <person name="Spieth J."/>
            <person name="Bieri T.A."/>
            <person name="Berkowicz N."/>
            <person name="Nelson J.O."/>
            <person name="Osborne J."/>
            <person name="Ding L."/>
            <person name="Meyer R."/>
            <person name="Sabo A."/>
            <person name="Shotland Y."/>
            <person name="Sinha P."/>
            <person name="Wohldmann P.E."/>
            <person name="Cook L.L."/>
            <person name="Hickenbotham M.T."/>
            <person name="Eldred J."/>
            <person name="Williams D."/>
            <person name="Jones T.A."/>
            <person name="She X."/>
            <person name="Ciccarelli F.D."/>
            <person name="Izaurralde E."/>
            <person name="Taylor J."/>
            <person name="Schmutz J."/>
            <person name="Myers R.M."/>
            <person name="Cox D.R."/>
            <person name="Huang X."/>
            <person name="McPherson J.D."/>
            <person name="Mardis E.R."/>
            <person name="Clifton S.W."/>
            <person name="Warren W.C."/>
            <person name="Chinwalla A.T."/>
            <person name="Eddy S.R."/>
            <person name="Marra M.A."/>
            <person name="Ovcharenko I."/>
            <person name="Furey T.S."/>
            <person name="Miller W."/>
            <person name="Eichler E.E."/>
            <person name="Bork P."/>
            <person name="Suyama M."/>
            <person name="Torrents D."/>
            <person name="Waterston R.H."/>
            <person name="Wilson R.K."/>
        </authorList>
    </citation>
    <scope>NUCLEOTIDE SEQUENCE [LARGE SCALE GENOMIC DNA]</scope>
</reference>